<keyword id="KW-0223">Dioxygenase</keyword>
<keyword id="KW-0408">Iron</keyword>
<keyword id="KW-0479">Metal-binding</keyword>
<keyword id="KW-0560">Oxidoreductase</keyword>
<keyword id="KW-0585">Phenylalanine catabolism</keyword>
<keyword id="KW-1185">Reference proteome</keyword>
<keyword id="KW-0828">Tyrosine catabolism</keyword>
<sequence length="439" mass="49398">MSEYKYLSGFGSHFSSEDERYPNSLPVGQNSPQVCPYKLYAEQLSGSAFTAPRTENMRTWLYRKLPSAAHLPFQPFKGAEYFSQNWDEQPPNPNQLRWKPFDLPPKDGKNVNFVEGLHTVCGAGDPRSRHGLAIHIYSCNGSMDNSAFYNSDGDFLIVPQQGVLDITTEFGRMSVAPNEICVIPQGIRFAVNVDSPSRGYILEVYDDHFVLPDLGPIGANGLANPRDFETPVAWFDDRDVKDFQVISKFQGRLFVAKQNHTVFDVVAWHGNYVPFKYDLSKFMVINSVSFDHCDPSIFTVLTCPSLRAGTAIADFVIFPPRWSVQEHTFRPPYYHRNCMSEFMGLILGKYEAKEDGFAAGGATLHSMMTPHGPDVKCFEGASNAKLVPERVAEGTQAFMFESSLSLAVTKWGEETCQKLDAAYYECWQALKNNFQITKN</sequence>
<feature type="chain" id="PRO_0000220242" description="Homogentisate 1,2-dioxygenase">
    <location>
        <begin position="1"/>
        <end position="439"/>
    </location>
</feature>
<feature type="binding site" evidence="1">
    <location>
        <position position="335"/>
    </location>
    <ligand>
        <name>Fe cation</name>
        <dbReference type="ChEBI" id="CHEBI:24875"/>
    </ligand>
</feature>
<feature type="binding site" evidence="1">
    <location>
        <position position="341"/>
    </location>
    <ligand>
        <name>Fe cation</name>
        <dbReference type="ChEBI" id="CHEBI:24875"/>
    </ligand>
</feature>
<feature type="binding site" evidence="1">
    <location>
        <position position="371"/>
    </location>
    <ligand>
        <name>Fe cation</name>
        <dbReference type="ChEBI" id="CHEBI:24875"/>
    </ligand>
</feature>
<feature type="sequence conflict" description="In Ref. 1; AAF36489." evidence="2" ref="1">
    <location>
        <begin position="96"/>
        <end position="106"/>
    </location>
</feature>
<proteinExistence type="evidence at transcript level"/>
<organism evidence="4">
    <name type="scientific">Drosophila melanogaster</name>
    <name type="common">Fruit fly</name>
    <dbReference type="NCBI Taxonomy" id="7227"/>
    <lineage>
        <taxon>Eukaryota</taxon>
        <taxon>Metazoa</taxon>
        <taxon>Ecdysozoa</taxon>
        <taxon>Arthropoda</taxon>
        <taxon>Hexapoda</taxon>
        <taxon>Insecta</taxon>
        <taxon>Pterygota</taxon>
        <taxon>Neoptera</taxon>
        <taxon>Endopterygota</taxon>
        <taxon>Diptera</taxon>
        <taxon>Brachycera</taxon>
        <taxon>Muscomorpha</taxon>
        <taxon>Ephydroidea</taxon>
        <taxon>Drosophilidae</taxon>
        <taxon>Drosophila</taxon>
        <taxon>Sophophora</taxon>
    </lineage>
</organism>
<name>HGD_DROME</name>
<comment type="catalytic activity">
    <reaction>
        <text>homogentisate + O2 = 4-maleylacetoacetate + H(+)</text>
        <dbReference type="Rhea" id="RHEA:15449"/>
        <dbReference type="ChEBI" id="CHEBI:15378"/>
        <dbReference type="ChEBI" id="CHEBI:15379"/>
        <dbReference type="ChEBI" id="CHEBI:16169"/>
        <dbReference type="ChEBI" id="CHEBI:17105"/>
        <dbReference type="EC" id="1.13.11.5"/>
    </reaction>
</comment>
<comment type="cofactor">
    <cofactor evidence="1">
        <name>Fe cation</name>
        <dbReference type="ChEBI" id="CHEBI:24875"/>
    </cofactor>
</comment>
<comment type="pathway">
    <text>Amino-acid degradation; L-phenylalanine degradation; acetoacetate and fumarate from L-phenylalanine: step 4/6.</text>
</comment>
<comment type="similarity">
    <text evidence="2">Belongs to the homogentisate dioxygenase family.</text>
</comment>
<dbReference type="EC" id="1.13.11.5"/>
<dbReference type="EMBL" id="AF131124">
    <property type="protein sequence ID" value="AAF36489.1"/>
    <property type="molecule type" value="Genomic_DNA"/>
</dbReference>
<dbReference type="EMBL" id="AE014134">
    <property type="protein sequence ID" value="AAF53078.2"/>
    <property type="molecule type" value="Genomic_DNA"/>
</dbReference>
<dbReference type="EMBL" id="BT003496">
    <property type="protein sequence ID" value="AAO39500.1"/>
    <property type="molecule type" value="mRNA"/>
</dbReference>
<dbReference type="RefSeq" id="NP_523544.2">
    <property type="nucleotide sequence ID" value="NM_078820.3"/>
</dbReference>
<dbReference type="SMR" id="Q9VKJ0"/>
<dbReference type="BioGRID" id="60614">
    <property type="interactions" value="1"/>
</dbReference>
<dbReference type="DIP" id="DIP-23788N"/>
<dbReference type="FunCoup" id="Q9VKJ0">
    <property type="interactions" value="65"/>
</dbReference>
<dbReference type="STRING" id="7227.FBpp0079790"/>
<dbReference type="PaxDb" id="7227-FBpp0079790"/>
<dbReference type="DNASU" id="34552"/>
<dbReference type="EnsemblMetazoa" id="FBtr0080201">
    <property type="protein sequence ID" value="FBpp0079790"/>
    <property type="gene ID" value="FBgn0040211"/>
</dbReference>
<dbReference type="GeneID" id="34552"/>
<dbReference type="KEGG" id="dme:Dmel_CG4779"/>
<dbReference type="AGR" id="FB:FBgn0040211"/>
<dbReference type="CTD" id="34552"/>
<dbReference type="FlyBase" id="FBgn0040211">
    <property type="gene designation" value="Hgd"/>
</dbReference>
<dbReference type="VEuPathDB" id="VectorBase:FBgn0040211"/>
<dbReference type="eggNOG" id="KOG1417">
    <property type="taxonomic scope" value="Eukaryota"/>
</dbReference>
<dbReference type="GeneTree" id="ENSGT00390000004601"/>
<dbReference type="HOGENOM" id="CLU_027174_0_0_1"/>
<dbReference type="InParanoid" id="Q9VKJ0"/>
<dbReference type="OMA" id="MLPHGPD"/>
<dbReference type="OrthoDB" id="1689029at2759"/>
<dbReference type="PhylomeDB" id="Q9VKJ0"/>
<dbReference type="Reactome" id="R-DME-8963684">
    <property type="pathway name" value="Tyrosine catabolism"/>
</dbReference>
<dbReference type="UniPathway" id="UPA00139">
    <property type="reaction ID" value="UER00339"/>
</dbReference>
<dbReference type="BioGRID-ORCS" id="34552">
    <property type="hits" value="0 hits in 1 CRISPR screen"/>
</dbReference>
<dbReference type="GenomeRNAi" id="34552"/>
<dbReference type="PRO" id="PR:Q9VKJ0"/>
<dbReference type="Proteomes" id="UP000000803">
    <property type="component" value="Chromosome 2L"/>
</dbReference>
<dbReference type="Bgee" id="FBgn0040211">
    <property type="expression patterns" value="Expressed in capitellum (Drosophila) and 36 other cell types or tissues"/>
</dbReference>
<dbReference type="GO" id="GO:0004411">
    <property type="term" value="F:homogentisate 1,2-dioxygenase activity"/>
    <property type="evidence" value="ECO:0000318"/>
    <property type="project" value="GO_Central"/>
</dbReference>
<dbReference type="GO" id="GO:0046872">
    <property type="term" value="F:metal ion binding"/>
    <property type="evidence" value="ECO:0007669"/>
    <property type="project" value="UniProtKB-KW"/>
</dbReference>
<dbReference type="GO" id="GO:0006559">
    <property type="term" value="P:L-phenylalanine catabolic process"/>
    <property type="evidence" value="ECO:0000318"/>
    <property type="project" value="GO_Central"/>
</dbReference>
<dbReference type="GO" id="GO:0006572">
    <property type="term" value="P:tyrosine catabolic process"/>
    <property type="evidence" value="ECO:0007669"/>
    <property type="project" value="UniProtKB-KW"/>
</dbReference>
<dbReference type="CDD" id="cd07000">
    <property type="entry name" value="cupin_HGO_N"/>
    <property type="match status" value="1"/>
</dbReference>
<dbReference type="FunFam" id="2.60.120.10:FF:000026">
    <property type="entry name" value="Homogentisate 1,2-dioxygenase"/>
    <property type="match status" value="1"/>
</dbReference>
<dbReference type="Gene3D" id="2.60.120.10">
    <property type="entry name" value="Jelly Rolls"/>
    <property type="match status" value="1"/>
</dbReference>
<dbReference type="InterPro" id="IPR046451">
    <property type="entry name" value="HgmA_C"/>
</dbReference>
<dbReference type="InterPro" id="IPR046452">
    <property type="entry name" value="HgmA_N"/>
</dbReference>
<dbReference type="InterPro" id="IPR005708">
    <property type="entry name" value="Homogentis_dOase"/>
</dbReference>
<dbReference type="InterPro" id="IPR014710">
    <property type="entry name" value="RmlC-like_jellyroll"/>
</dbReference>
<dbReference type="InterPro" id="IPR011051">
    <property type="entry name" value="RmlC_Cupin_sf"/>
</dbReference>
<dbReference type="NCBIfam" id="TIGR01015">
    <property type="entry name" value="hmgA"/>
    <property type="match status" value="1"/>
</dbReference>
<dbReference type="PANTHER" id="PTHR11056">
    <property type="entry name" value="HOMOGENTISATE 1,2-DIOXYGENASE"/>
    <property type="match status" value="1"/>
</dbReference>
<dbReference type="PANTHER" id="PTHR11056:SF0">
    <property type="entry name" value="HOMOGENTISATE 1,2-DIOXYGENASE"/>
    <property type="match status" value="1"/>
</dbReference>
<dbReference type="Pfam" id="PF04209">
    <property type="entry name" value="HgmA_C"/>
    <property type="match status" value="1"/>
</dbReference>
<dbReference type="Pfam" id="PF20510">
    <property type="entry name" value="HgmA_N"/>
    <property type="match status" value="1"/>
</dbReference>
<dbReference type="SUPFAM" id="SSF51182">
    <property type="entry name" value="RmlC-like cupins"/>
    <property type="match status" value="1"/>
</dbReference>
<protein>
    <recommendedName>
        <fullName evidence="3">Homogentisate 1,2-dioxygenase</fullName>
        <ecNumber>1.13.11.5</ecNumber>
    </recommendedName>
    <alternativeName>
        <fullName>Homogentisate oxygenase</fullName>
    </alternativeName>
    <alternativeName>
        <fullName>Homogentisic acid oxidase</fullName>
    </alternativeName>
    <alternativeName>
        <fullName>Homogentisicase</fullName>
    </alternativeName>
</protein>
<accession>Q9VKJ0</accession>
<accession>Q86P40</accession>
<gene>
    <name evidence="3" type="primary">Hgd</name>
    <name evidence="3" type="synonym">Hgo</name>
    <name evidence="3" type="ORF">CG4779</name>
</gene>
<reference key="1">
    <citation type="submission" date="1999-02" db="EMBL/GenBank/DDBJ databases">
        <authorList>
            <person name="Schmidt S.R."/>
        </authorList>
    </citation>
    <scope>NUCLEOTIDE SEQUENCE [GENOMIC DNA]</scope>
</reference>
<reference key="2">
    <citation type="journal article" date="2000" name="Science">
        <title>The genome sequence of Drosophila melanogaster.</title>
        <authorList>
            <person name="Adams M.D."/>
            <person name="Celniker S.E."/>
            <person name="Holt R.A."/>
            <person name="Evans C.A."/>
            <person name="Gocayne J.D."/>
            <person name="Amanatides P.G."/>
            <person name="Scherer S.E."/>
            <person name="Li P.W."/>
            <person name="Hoskins R.A."/>
            <person name="Galle R.F."/>
            <person name="George R.A."/>
            <person name="Lewis S.E."/>
            <person name="Richards S."/>
            <person name="Ashburner M."/>
            <person name="Henderson S.N."/>
            <person name="Sutton G.G."/>
            <person name="Wortman J.R."/>
            <person name="Yandell M.D."/>
            <person name="Zhang Q."/>
            <person name="Chen L.X."/>
            <person name="Brandon R.C."/>
            <person name="Rogers Y.-H.C."/>
            <person name="Blazej R.G."/>
            <person name="Champe M."/>
            <person name="Pfeiffer B.D."/>
            <person name="Wan K.H."/>
            <person name="Doyle C."/>
            <person name="Baxter E.G."/>
            <person name="Helt G."/>
            <person name="Nelson C.R."/>
            <person name="Miklos G.L.G."/>
            <person name="Abril J.F."/>
            <person name="Agbayani A."/>
            <person name="An H.-J."/>
            <person name="Andrews-Pfannkoch C."/>
            <person name="Baldwin D."/>
            <person name="Ballew R.M."/>
            <person name="Basu A."/>
            <person name="Baxendale J."/>
            <person name="Bayraktaroglu L."/>
            <person name="Beasley E.M."/>
            <person name="Beeson K.Y."/>
            <person name="Benos P.V."/>
            <person name="Berman B.P."/>
            <person name="Bhandari D."/>
            <person name="Bolshakov S."/>
            <person name="Borkova D."/>
            <person name="Botchan M.R."/>
            <person name="Bouck J."/>
            <person name="Brokstein P."/>
            <person name="Brottier P."/>
            <person name="Burtis K.C."/>
            <person name="Busam D.A."/>
            <person name="Butler H."/>
            <person name="Cadieu E."/>
            <person name="Center A."/>
            <person name="Chandra I."/>
            <person name="Cherry J.M."/>
            <person name="Cawley S."/>
            <person name="Dahlke C."/>
            <person name="Davenport L.B."/>
            <person name="Davies P."/>
            <person name="de Pablos B."/>
            <person name="Delcher A."/>
            <person name="Deng Z."/>
            <person name="Mays A.D."/>
            <person name="Dew I."/>
            <person name="Dietz S.M."/>
            <person name="Dodson K."/>
            <person name="Doup L.E."/>
            <person name="Downes M."/>
            <person name="Dugan-Rocha S."/>
            <person name="Dunkov B.C."/>
            <person name="Dunn P."/>
            <person name="Durbin K.J."/>
            <person name="Evangelista C.C."/>
            <person name="Ferraz C."/>
            <person name="Ferriera S."/>
            <person name="Fleischmann W."/>
            <person name="Fosler C."/>
            <person name="Gabrielian A.E."/>
            <person name="Garg N.S."/>
            <person name="Gelbart W.M."/>
            <person name="Glasser K."/>
            <person name="Glodek A."/>
            <person name="Gong F."/>
            <person name="Gorrell J.H."/>
            <person name="Gu Z."/>
            <person name="Guan P."/>
            <person name="Harris M."/>
            <person name="Harris N.L."/>
            <person name="Harvey D.A."/>
            <person name="Heiman T.J."/>
            <person name="Hernandez J.R."/>
            <person name="Houck J."/>
            <person name="Hostin D."/>
            <person name="Houston K.A."/>
            <person name="Howland T.J."/>
            <person name="Wei M.-H."/>
            <person name="Ibegwam C."/>
            <person name="Jalali M."/>
            <person name="Kalush F."/>
            <person name="Karpen G.H."/>
            <person name="Ke Z."/>
            <person name="Kennison J.A."/>
            <person name="Ketchum K.A."/>
            <person name="Kimmel B.E."/>
            <person name="Kodira C.D."/>
            <person name="Kraft C.L."/>
            <person name="Kravitz S."/>
            <person name="Kulp D."/>
            <person name="Lai Z."/>
            <person name="Lasko P."/>
            <person name="Lei Y."/>
            <person name="Levitsky A.A."/>
            <person name="Li J.H."/>
            <person name="Li Z."/>
            <person name="Liang Y."/>
            <person name="Lin X."/>
            <person name="Liu X."/>
            <person name="Mattei B."/>
            <person name="McIntosh T.C."/>
            <person name="McLeod M.P."/>
            <person name="McPherson D."/>
            <person name="Merkulov G."/>
            <person name="Milshina N.V."/>
            <person name="Mobarry C."/>
            <person name="Morris J."/>
            <person name="Moshrefi A."/>
            <person name="Mount S.M."/>
            <person name="Moy M."/>
            <person name="Murphy B."/>
            <person name="Murphy L."/>
            <person name="Muzny D.M."/>
            <person name="Nelson D.L."/>
            <person name="Nelson D.R."/>
            <person name="Nelson K.A."/>
            <person name="Nixon K."/>
            <person name="Nusskern D.R."/>
            <person name="Pacleb J.M."/>
            <person name="Palazzolo M."/>
            <person name="Pittman G.S."/>
            <person name="Pan S."/>
            <person name="Pollard J."/>
            <person name="Puri V."/>
            <person name="Reese M.G."/>
            <person name="Reinert K."/>
            <person name="Remington K."/>
            <person name="Saunders R.D.C."/>
            <person name="Scheeler F."/>
            <person name="Shen H."/>
            <person name="Shue B.C."/>
            <person name="Siden-Kiamos I."/>
            <person name="Simpson M."/>
            <person name="Skupski M.P."/>
            <person name="Smith T.J."/>
            <person name="Spier E."/>
            <person name="Spradling A.C."/>
            <person name="Stapleton M."/>
            <person name="Strong R."/>
            <person name="Sun E."/>
            <person name="Svirskas R."/>
            <person name="Tector C."/>
            <person name="Turner R."/>
            <person name="Venter E."/>
            <person name="Wang A.H."/>
            <person name="Wang X."/>
            <person name="Wang Z.-Y."/>
            <person name="Wassarman D.A."/>
            <person name="Weinstock G.M."/>
            <person name="Weissenbach J."/>
            <person name="Williams S.M."/>
            <person name="Woodage T."/>
            <person name="Worley K.C."/>
            <person name="Wu D."/>
            <person name="Yang S."/>
            <person name="Yao Q.A."/>
            <person name="Ye J."/>
            <person name="Yeh R.-F."/>
            <person name="Zaveri J.S."/>
            <person name="Zhan M."/>
            <person name="Zhang G."/>
            <person name="Zhao Q."/>
            <person name="Zheng L."/>
            <person name="Zheng X.H."/>
            <person name="Zhong F.N."/>
            <person name="Zhong W."/>
            <person name="Zhou X."/>
            <person name="Zhu S.C."/>
            <person name="Zhu X."/>
            <person name="Smith H.O."/>
            <person name="Gibbs R.A."/>
            <person name="Myers E.W."/>
            <person name="Rubin G.M."/>
            <person name="Venter J.C."/>
        </authorList>
    </citation>
    <scope>NUCLEOTIDE SEQUENCE [LARGE SCALE GENOMIC DNA]</scope>
    <source>
        <strain>Berkeley</strain>
    </source>
</reference>
<reference key="3">
    <citation type="journal article" date="2002" name="Genome Biol.">
        <title>Annotation of the Drosophila melanogaster euchromatic genome: a systematic review.</title>
        <authorList>
            <person name="Misra S."/>
            <person name="Crosby M.A."/>
            <person name="Mungall C.J."/>
            <person name="Matthews B.B."/>
            <person name="Campbell K.S."/>
            <person name="Hradecky P."/>
            <person name="Huang Y."/>
            <person name="Kaminker J.S."/>
            <person name="Millburn G.H."/>
            <person name="Prochnik S.E."/>
            <person name="Smith C.D."/>
            <person name="Tupy J.L."/>
            <person name="Whitfield E.J."/>
            <person name="Bayraktaroglu L."/>
            <person name="Berman B.P."/>
            <person name="Bettencourt B.R."/>
            <person name="Celniker S.E."/>
            <person name="de Grey A.D.N.J."/>
            <person name="Drysdale R.A."/>
            <person name="Harris N.L."/>
            <person name="Richter J."/>
            <person name="Russo S."/>
            <person name="Schroeder A.J."/>
            <person name="Shu S.Q."/>
            <person name="Stapleton M."/>
            <person name="Yamada C."/>
            <person name="Ashburner M."/>
            <person name="Gelbart W.M."/>
            <person name="Rubin G.M."/>
            <person name="Lewis S.E."/>
        </authorList>
    </citation>
    <scope>GENOME REANNOTATION</scope>
    <source>
        <strain>Berkeley</strain>
    </source>
</reference>
<reference key="4">
    <citation type="journal article" date="2002" name="Genome Biol.">
        <title>A Drosophila full-length cDNA resource.</title>
        <authorList>
            <person name="Stapleton M."/>
            <person name="Carlson J.W."/>
            <person name="Brokstein P."/>
            <person name="Yu C."/>
            <person name="Champe M."/>
            <person name="George R.A."/>
            <person name="Guarin H."/>
            <person name="Kronmiller B."/>
            <person name="Pacleb J.M."/>
            <person name="Park S."/>
            <person name="Wan K.H."/>
            <person name="Rubin G.M."/>
            <person name="Celniker S.E."/>
        </authorList>
    </citation>
    <scope>NUCLEOTIDE SEQUENCE [LARGE SCALE MRNA]</scope>
    <source>
        <strain>Berkeley</strain>
        <tissue>Embryo</tissue>
    </source>
</reference>
<evidence type="ECO:0000250" key="1"/>
<evidence type="ECO:0000305" key="2"/>
<evidence type="ECO:0000312" key="3">
    <source>
        <dbReference type="FlyBase" id="FBgn0040211"/>
    </source>
</evidence>
<evidence type="ECO:0000312" key="4">
    <source>
        <dbReference type="Proteomes" id="UP000000803"/>
    </source>
</evidence>